<sequence length="508" mass="53918">MKSLTLIPGQLSLSQLRDIYSHPVNITLDSGAFAAIDESVACVNAILAEGRTAYGINTGFGLLAQTRISTEDLENLQRSLVLSHAAGVGEPLDDDLARLIMVLKINSLSRGFSGIRLSVIQALIGLVNAGVTPWIPAKGSVGASGDLAPLAHMSLTLLGEGKARVRGGDWLPATEALRQVGLEPITLAAKEGLALLNGTQASTAFALRGLFEAEDLFASAVVCGALTTEAALGSRRPFDARIHEVRGQRGQIDAAALYRHLLTDDSAISQSHHNCSKVQDPYSLRCQPQVMGACLTQIRQAAEVLLAEANAVSDNPLVFAAENDVISGGNFHAEPVAMAADNIALAIAEIGSLSERRIALMMDSHMSQLPPFLVKNGGVNSGFMIAQVTAAALASENKALSHPHSVDSLPTSANQEDHVSMAPAAGRRLWAMAENTRGVLAVEWLAAAQGLDMREGLTTSPLLEEARHLLRERVPHYTQDRYFAPDIDNAIALLAARHLTRLLPAVLH</sequence>
<name>HUTH_KLEP7</name>
<dbReference type="EC" id="4.3.1.3" evidence="1"/>
<dbReference type="EMBL" id="CP000647">
    <property type="protein sequence ID" value="ABR76232.1"/>
    <property type="molecule type" value="Genomic_DNA"/>
</dbReference>
<dbReference type="RefSeq" id="WP_004893303.1">
    <property type="nucleotide sequence ID" value="NC_009648.1"/>
</dbReference>
<dbReference type="SMR" id="A6T6L1"/>
<dbReference type="STRING" id="272620.KPN_00796"/>
<dbReference type="jPOST" id="A6T6L1"/>
<dbReference type="PaxDb" id="272620-KPN_00796"/>
<dbReference type="EnsemblBacteria" id="ABR76232">
    <property type="protein sequence ID" value="ABR76232"/>
    <property type="gene ID" value="KPN_00796"/>
</dbReference>
<dbReference type="KEGG" id="kpn:KPN_00796"/>
<dbReference type="HOGENOM" id="CLU_014801_4_0_6"/>
<dbReference type="UniPathway" id="UPA00379">
    <property type="reaction ID" value="UER00549"/>
</dbReference>
<dbReference type="Proteomes" id="UP000000265">
    <property type="component" value="Chromosome"/>
</dbReference>
<dbReference type="GO" id="GO:0005737">
    <property type="term" value="C:cytoplasm"/>
    <property type="evidence" value="ECO:0007669"/>
    <property type="project" value="UniProtKB-SubCell"/>
</dbReference>
<dbReference type="GO" id="GO:0004397">
    <property type="term" value="F:histidine ammonia-lyase activity"/>
    <property type="evidence" value="ECO:0007669"/>
    <property type="project" value="UniProtKB-UniRule"/>
</dbReference>
<dbReference type="GO" id="GO:0019556">
    <property type="term" value="P:L-histidine catabolic process to glutamate and formamide"/>
    <property type="evidence" value="ECO:0007669"/>
    <property type="project" value="UniProtKB-UniPathway"/>
</dbReference>
<dbReference type="GO" id="GO:0019557">
    <property type="term" value="P:L-histidine catabolic process to glutamate and formate"/>
    <property type="evidence" value="ECO:0007669"/>
    <property type="project" value="UniProtKB-UniPathway"/>
</dbReference>
<dbReference type="CDD" id="cd00332">
    <property type="entry name" value="PAL-HAL"/>
    <property type="match status" value="1"/>
</dbReference>
<dbReference type="FunFam" id="1.10.275.10:FF:000005">
    <property type="entry name" value="Histidine ammonia-lyase"/>
    <property type="match status" value="1"/>
</dbReference>
<dbReference type="FunFam" id="1.20.200.10:FF:000003">
    <property type="entry name" value="Histidine ammonia-lyase"/>
    <property type="match status" value="1"/>
</dbReference>
<dbReference type="Gene3D" id="1.20.200.10">
    <property type="entry name" value="Fumarase/aspartase (Central domain)"/>
    <property type="match status" value="1"/>
</dbReference>
<dbReference type="Gene3D" id="1.10.275.10">
    <property type="entry name" value="Fumarase/aspartase (N-terminal domain)"/>
    <property type="match status" value="1"/>
</dbReference>
<dbReference type="HAMAP" id="MF_00229">
    <property type="entry name" value="His_ammonia_lyase"/>
    <property type="match status" value="1"/>
</dbReference>
<dbReference type="InterPro" id="IPR001106">
    <property type="entry name" value="Aromatic_Lyase"/>
</dbReference>
<dbReference type="InterPro" id="IPR024083">
    <property type="entry name" value="Fumarase/histidase_N"/>
</dbReference>
<dbReference type="InterPro" id="IPR005921">
    <property type="entry name" value="HutH"/>
</dbReference>
<dbReference type="InterPro" id="IPR008948">
    <property type="entry name" value="L-Aspartase-like"/>
</dbReference>
<dbReference type="InterPro" id="IPR022313">
    <property type="entry name" value="Phe/His_NH3-lyase_AS"/>
</dbReference>
<dbReference type="NCBIfam" id="TIGR01225">
    <property type="entry name" value="hutH"/>
    <property type="match status" value="1"/>
</dbReference>
<dbReference type="NCBIfam" id="NF006871">
    <property type="entry name" value="PRK09367.1"/>
    <property type="match status" value="1"/>
</dbReference>
<dbReference type="PANTHER" id="PTHR10362">
    <property type="entry name" value="HISTIDINE AMMONIA-LYASE"/>
    <property type="match status" value="1"/>
</dbReference>
<dbReference type="Pfam" id="PF00221">
    <property type="entry name" value="Lyase_aromatic"/>
    <property type="match status" value="1"/>
</dbReference>
<dbReference type="SUPFAM" id="SSF48557">
    <property type="entry name" value="L-aspartase-like"/>
    <property type="match status" value="1"/>
</dbReference>
<dbReference type="PROSITE" id="PS00488">
    <property type="entry name" value="PAL_HISTIDASE"/>
    <property type="match status" value="1"/>
</dbReference>
<feature type="chain" id="PRO_1000021558" description="Histidine ammonia-lyase">
    <location>
        <begin position="1"/>
        <end position="508"/>
    </location>
</feature>
<feature type="modified residue" description="2,3-didehydroalanine (Ser)" evidence="1">
    <location>
        <position position="144"/>
    </location>
</feature>
<feature type="cross-link" description="5-imidazolinone (Ala-Gly)" evidence="1">
    <location>
        <begin position="143"/>
        <end position="145"/>
    </location>
</feature>
<comment type="catalytic activity">
    <reaction evidence="1">
        <text>L-histidine = trans-urocanate + NH4(+)</text>
        <dbReference type="Rhea" id="RHEA:21232"/>
        <dbReference type="ChEBI" id="CHEBI:17771"/>
        <dbReference type="ChEBI" id="CHEBI:28938"/>
        <dbReference type="ChEBI" id="CHEBI:57595"/>
        <dbReference type="EC" id="4.3.1.3"/>
    </reaction>
</comment>
<comment type="pathway">
    <text evidence="1">Amino-acid degradation; L-histidine degradation into L-glutamate; N-formimidoyl-L-glutamate from L-histidine: step 1/3.</text>
</comment>
<comment type="subcellular location">
    <subcellularLocation>
        <location evidence="1">Cytoplasm</location>
    </subcellularLocation>
</comment>
<comment type="PTM">
    <text evidence="1">Contains an active site 4-methylidene-imidazol-5-one (MIO), which is formed autocatalytically by cyclization and dehydration of residues Ala-Ser-Gly.</text>
</comment>
<comment type="similarity">
    <text evidence="1">Belongs to the PAL/histidase family.</text>
</comment>
<protein>
    <recommendedName>
        <fullName evidence="1">Histidine ammonia-lyase</fullName>
        <shortName evidence="1">Histidase</shortName>
        <ecNumber evidence="1">4.3.1.3</ecNumber>
    </recommendedName>
</protein>
<evidence type="ECO:0000255" key="1">
    <source>
        <dbReference type="HAMAP-Rule" id="MF_00229"/>
    </source>
</evidence>
<keyword id="KW-0963">Cytoplasm</keyword>
<keyword id="KW-0369">Histidine metabolism</keyword>
<keyword id="KW-0456">Lyase</keyword>
<reference key="1">
    <citation type="submission" date="2006-09" db="EMBL/GenBank/DDBJ databases">
        <authorList>
            <consortium name="The Klebsiella pneumonia Genome Sequencing Project"/>
            <person name="McClelland M."/>
            <person name="Sanderson E.K."/>
            <person name="Spieth J."/>
            <person name="Clifton W.S."/>
            <person name="Latreille P."/>
            <person name="Sabo A."/>
            <person name="Pepin K."/>
            <person name="Bhonagiri V."/>
            <person name="Porwollik S."/>
            <person name="Ali J."/>
            <person name="Wilson R.K."/>
        </authorList>
    </citation>
    <scope>NUCLEOTIDE SEQUENCE [LARGE SCALE GENOMIC DNA]</scope>
    <source>
        <strain>ATCC 700721 / MGH 78578</strain>
    </source>
</reference>
<organism>
    <name type="scientific">Klebsiella pneumoniae subsp. pneumoniae (strain ATCC 700721 / MGH 78578)</name>
    <dbReference type="NCBI Taxonomy" id="272620"/>
    <lineage>
        <taxon>Bacteria</taxon>
        <taxon>Pseudomonadati</taxon>
        <taxon>Pseudomonadota</taxon>
        <taxon>Gammaproteobacteria</taxon>
        <taxon>Enterobacterales</taxon>
        <taxon>Enterobacteriaceae</taxon>
        <taxon>Klebsiella/Raoultella group</taxon>
        <taxon>Klebsiella</taxon>
        <taxon>Klebsiella pneumoniae complex</taxon>
    </lineage>
</organism>
<proteinExistence type="inferred from homology"/>
<accession>A6T6L1</accession>
<gene>
    <name evidence="1" type="primary">hutH</name>
    <name type="ordered locus">KPN78578_07710</name>
    <name type="ORF">KPN_00796</name>
</gene>